<keyword id="KW-0067">ATP-binding</keyword>
<keyword id="KW-0173">Coenzyme A biosynthesis</keyword>
<keyword id="KW-0963">Cytoplasm</keyword>
<keyword id="KW-0418">Kinase</keyword>
<keyword id="KW-0547">Nucleotide-binding</keyword>
<keyword id="KW-1185">Reference proteome</keyword>
<keyword id="KW-0808">Transferase</keyword>
<accession>A7IHN7</accession>
<protein>
    <recommendedName>
        <fullName evidence="1">Pantothenate kinase</fullName>
        <ecNumber evidence="1">2.7.1.33</ecNumber>
    </recommendedName>
    <alternativeName>
        <fullName evidence="1">Pantothenic acid kinase</fullName>
    </alternativeName>
</protein>
<sequence length="323" mass="37076">MDRRLDPGLSPYRTFSRAEWAALRRDTPMTLRPDEITRLEGLGVHLSMQEVEEIYLPLSRLLSLYVAATQKLFRAMSYFLDSRDSEANGDGKMPYIIGVAGSVAVGKSTTARVLQALLARWPNTPKVDLVTTDGFLLPNAILEREGLMDKKGFPESYDLPLLLRFLTDIKAGRRPVRAPLYSHFFYDVMPDQYVEIDRPDILIVEGLNVLQTTRPPKDGKAIPFVSDFFDFSVYIDGDEDVIERWYVERFMRLRATAFKDPLSYFHRYSQLTEEQARATALSIWRGINLPNLMDNVLPTRQRADLILRKTGEHEVAEVSLRRL</sequence>
<gene>
    <name evidence="1" type="primary">coaA</name>
    <name type="ordered locus">Xaut_2287</name>
</gene>
<feature type="chain" id="PRO_1000099959" description="Pantothenate kinase">
    <location>
        <begin position="1"/>
        <end position="323"/>
    </location>
</feature>
<feature type="binding site" evidence="1">
    <location>
        <begin position="101"/>
        <end position="108"/>
    </location>
    <ligand>
        <name>ATP</name>
        <dbReference type="ChEBI" id="CHEBI:30616"/>
    </ligand>
</feature>
<comment type="catalytic activity">
    <reaction evidence="1">
        <text>(R)-pantothenate + ATP = (R)-4'-phosphopantothenate + ADP + H(+)</text>
        <dbReference type="Rhea" id="RHEA:16373"/>
        <dbReference type="ChEBI" id="CHEBI:10986"/>
        <dbReference type="ChEBI" id="CHEBI:15378"/>
        <dbReference type="ChEBI" id="CHEBI:29032"/>
        <dbReference type="ChEBI" id="CHEBI:30616"/>
        <dbReference type="ChEBI" id="CHEBI:456216"/>
        <dbReference type="EC" id="2.7.1.33"/>
    </reaction>
</comment>
<comment type="pathway">
    <text evidence="1">Cofactor biosynthesis; coenzyme A biosynthesis; CoA from (R)-pantothenate: step 1/5.</text>
</comment>
<comment type="subcellular location">
    <subcellularLocation>
        <location evidence="1">Cytoplasm</location>
    </subcellularLocation>
</comment>
<comment type="similarity">
    <text evidence="1">Belongs to the prokaryotic pantothenate kinase family.</text>
</comment>
<reference key="1">
    <citation type="submission" date="2007-07" db="EMBL/GenBank/DDBJ databases">
        <title>Complete sequence of chromosome of Xanthobacter autotrophicus Py2.</title>
        <authorList>
            <consortium name="US DOE Joint Genome Institute"/>
            <person name="Copeland A."/>
            <person name="Lucas S."/>
            <person name="Lapidus A."/>
            <person name="Barry K."/>
            <person name="Glavina del Rio T."/>
            <person name="Hammon N."/>
            <person name="Israni S."/>
            <person name="Dalin E."/>
            <person name="Tice H."/>
            <person name="Pitluck S."/>
            <person name="Sims D."/>
            <person name="Brettin T."/>
            <person name="Bruce D."/>
            <person name="Detter J.C."/>
            <person name="Han C."/>
            <person name="Tapia R."/>
            <person name="Brainard J."/>
            <person name="Schmutz J."/>
            <person name="Larimer F."/>
            <person name="Land M."/>
            <person name="Hauser L."/>
            <person name="Kyrpides N."/>
            <person name="Kim E."/>
            <person name="Ensigns S.A."/>
            <person name="Richardson P."/>
        </authorList>
    </citation>
    <scope>NUCLEOTIDE SEQUENCE [LARGE SCALE GENOMIC DNA]</scope>
    <source>
        <strain>ATCC BAA-1158 / Py2</strain>
    </source>
</reference>
<evidence type="ECO:0000255" key="1">
    <source>
        <dbReference type="HAMAP-Rule" id="MF_00215"/>
    </source>
</evidence>
<dbReference type="EC" id="2.7.1.33" evidence="1"/>
<dbReference type="EMBL" id="CP000781">
    <property type="protein sequence ID" value="ABS67530.1"/>
    <property type="molecule type" value="Genomic_DNA"/>
</dbReference>
<dbReference type="SMR" id="A7IHN7"/>
<dbReference type="STRING" id="78245.Xaut_2287"/>
<dbReference type="KEGG" id="xau:Xaut_2287"/>
<dbReference type="eggNOG" id="COG1072">
    <property type="taxonomic scope" value="Bacteria"/>
</dbReference>
<dbReference type="HOGENOM" id="CLU_053818_1_1_5"/>
<dbReference type="OrthoDB" id="1550976at2"/>
<dbReference type="PhylomeDB" id="A7IHN7"/>
<dbReference type="UniPathway" id="UPA00241">
    <property type="reaction ID" value="UER00352"/>
</dbReference>
<dbReference type="Proteomes" id="UP000002417">
    <property type="component" value="Chromosome"/>
</dbReference>
<dbReference type="GO" id="GO:0005737">
    <property type="term" value="C:cytoplasm"/>
    <property type="evidence" value="ECO:0007669"/>
    <property type="project" value="UniProtKB-SubCell"/>
</dbReference>
<dbReference type="GO" id="GO:0005524">
    <property type="term" value="F:ATP binding"/>
    <property type="evidence" value="ECO:0007669"/>
    <property type="project" value="UniProtKB-UniRule"/>
</dbReference>
<dbReference type="GO" id="GO:0004594">
    <property type="term" value="F:pantothenate kinase activity"/>
    <property type="evidence" value="ECO:0007669"/>
    <property type="project" value="UniProtKB-UniRule"/>
</dbReference>
<dbReference type="GO" id="GO:0015937">
    <property type="term" value="P:coenzyme A biosynthetic process"/>
    <property type="evidence" value="ECO:0007669"/>
    <property type="project" value="UniProtKB-UniRule"/>
</dbReference>
<dbReference type="CDD" id="cd02025">
    <property type="entry name" value="PanK"/>
    <property type="match status" value="1"/>
</dbReference>
<dbReference type="Gene3D" id="3.40.50.300">
    <property type="entry name" value="P-loop containing nucleotide triphosphate hydrolases"/>
    <property type="match status" value="1"/>
</dbReference>
<dbReference type="HAMAP" id="MF_00215">
    <property type="entry name" value="Pantothen_kinase_1"/>
    <property type="match status" value="1"/>
</dbReference>
<dbReference type="InterPro" id="IPR027417">
    <property type="entry name" value="P-loop_NTPase"/>
</dbReference>
<dbReference type="InterPro" id="IPR004566">
    <property type="entry name" value="PanK"/>
</dbReference>
<dbReference type="InterPro" id="IPR006083">
    <property type="entry name" value="PRK/URK"/>
</dbReference>
<dbReference type="NCBIfam" id="TIGR00554">
    <property type="entry name" value="panK_bact"/>
    <property type="match status" value="1"/>
</dbReference>
<dbReference type="PANTHER" id="PTHR10285">
    <property type="entry name" value="URIDINE KINASE"/>
    <property type="match status" value="1"/>
</dbReference>
<dbReference type="Pfam" id="PF00485">
    <property type="entry name" value="PRK"/>
    <property type="match status" value="1"/>
</dbReference>
<dbReference type="PIRSF" id="PIRSF000545">
    <property type="entry name" value="Pantothenate_kin"/>
    <property type="match status" value="1"/>
</dbReference>
<dbReference type="SUPFAM" id="SSF52540">
    <property type="entry name" value="P-loop containing nucleoside triphosphate hydrolases"/>
    <property type="match status" value="1"/>
</dbReference>
<organism>
    <name type="scientific">Xanthobacter autotrophicus (strain ATCC BAA-1158 / Py2)</name>
    <dbReference type="NCBI Taxonomy" id="78245"/>
    <lineage>
        <taxon>Bacteria</taxon>
        <taxon>Pseudomonadati</taxon>
        <taxon>Pseudomonadota</taxon>
        <taxon>Alphaproteobacteria</taxon>
        <taxon>Hyphomicrobiales</taxon>
        <taxon>Xanthobacteraceae</taxon>
        <taxon>Xanthobacter</taxon>
    </lineage>
</organism>
<name>COAA_XANP2</name>
<proteinExistence type="inferred from homology"/>